<keyword id="KW-1185">Reference proteome</keyword>
<keyword id="KW-0687">Ribonucleoprotein</keyword>
<keyword id="KW-0689">Ribosomal protein</keyword>
<keyword id="KW-0694">RNA-binding</keyword>
<keyword id="KW-0699">rRNA-binding</keyword>
<comment type="function">
    <text evidence="1">This is one of the proteins that binds to the 5S RNA in the ribosome where it forms part of the central protuberance.</text>
</comment>
<comment type="subunit">
    <text evidence="1">Part of the 50S ribosomal subunit; part of the 5S rRNA/L5/L18/L25 subcomplex. Contacts the 5S rRNA. Binds to the 5S rRNA independently of L5 and L18.</text>
</comment>
<comment type="similarity">
    <text evidence="1">Belongs to the bacterial ribosomal protein bL25 family. CTC subfamily.</text>
</comment>
<organism>
    <name type="scientific">Brucella abortus (strain 2308)</name>
    <dbReference type="NCBI Taxonomy" id="359391"/>
    <lineage>
        <taxon>Bacteria</taxon>
        <taxon>Pseudomonadati</taxon>
        <taxon>Pseudomonadota</taxon>
        <taxon>Alphaproteobacteria</taxon>
        <taxon>Hyphomicrobiales</taxon>
        <taxon>Brucellaceae</taxon>
        <taxon>Brucella/Ochrobactrum group</taxon>
        <taxon>Brucella</taxon>
    </lineage>
</organism>
<gene>
    <name evidence="1" type="primary">rplY</name>
    <name evidence="1" type="synonym">ctc</name>
    <name type="ordered locus">BAB1_1551</name>
</gene>
<protein>
    <recommendedName>
        <fullName evidence="1">Large ribosomal subunit protein bL25</fullName>
    </recommendedName>
    <alternativeName>
        <fullName evidence="2">50S ribosomal protein L25</fullName>
    </alternativeName>
    <alternativeName>
        <fullName evidence="1">General stress protein CTC</fullName>
    </alternativeName>
</protein>
<accession>Q2YLX6</accession>
<feature type="chain" id="PRO_0000244194" description="Large ribosomal subunit protein bL25">
    <location>
        <begin position="1"/>
        <end position="207"/>
    </location>
</feature>
<proteinExistence type="inferred from homology"/>
<dbReference type="EMBL" id="AM040264">
    <property type="protein sequence ID" value="CAJ11507.1"/>
    <property type="molecule type" value="Genomic_DNA"/>
</dbReference>
<dbReference type="RefSeq" id="WP_002964640.1">
    <property type="nucleotide sequence ID" value="NZ_KN046823.1"/>
</dbReference>
<dbReference type="SMR" id="Q2YLX6"/>
<dbReference type="STRING" id="359391.BAB1_1551"/>
<dbReference type="KEGG" id="bmf:BAB1_1551"/>
<dbReference type="PATRIC" id="fig|359391.11.peg.1000"/>
<dbReference type="HOGENOM" id="CLU_075939_0_0_5"/>
<dbReference type="PhylomeDB" id="Q2YLX6"/>
<dbReference type="Proteomes" id="UP000002719">
    <property type="component" value="Chromosome I"/>
</dbReference>
<dbReference type="GO" id="GO:0022625">
    <property type="term" value="C:cytosolic large ribosomal subunit"/>
    <property type="evidence" value="ECO:0007669"/>
    <property type="project" value="TreeGrafter"/>
</dbReference>
<dbReference type="GO" id="GO:0008097">
    <property type="term" value="F:5S rRNA binding"/>
    <property type="evidence" value="ECO:0007669"/>
    <property type="project" value="InterPro"/>
</dbReference>
<dbReference type="GO" id="GO:0003735">
    <property type="term" value="F:structural constituent of ribosome"/>
    <property type="evidence" value="ECO:0007669"/>
    <property type="project" value="InterPro"/>
</dbReference>
<dbReference type="GO" id="GO:0006412">
    <property type="term" value="P:translation"/>
    <property type="evidence" value="ECO:0007669"/>
    <property type="project" value="UniProtKB-UniRule"/>
</dbReference>
<dbReference type="CDD" id="cd00495">
    <property type="entry name" value="Ribosomal_L25_TL5_CTC"/>
    <property type="match status" value="1"/>
</dbReference>
<dbReference type="Gene3D" id="2.170.120.20">
    <property type="entry name" value="Ribosomal protein L25, beta domain"/>
    <property type="match status" value="1"/>
</dbReference>
<dbReference type="Gene3D" id="2.40.240.10">
    <property type="entry name" value="Ribosomal Protein L25, Chain P"/>
    <property type="match status" value="1"/>
</dbReference>
<dbReference type="HAMAP" id="MF_01334">
    <property type="entry name" value="Ribosomal_bL25_CTC"/>
    <property type="match status" value="1"/>
</dbReference>
<dbReference type="InterPro" id="IPR020056">
    <property type="entry name" value="Rbsml_bL25/Gln-tRNA_synth_N"/>
</dbReference>
<dbReference type="InterPro" id="IPR011035">
    <property type="entry name" value="Ribosomal_bL25/Gln-tRNA_synth"/>
</dbReference>
<dbReference type="InterPro" id="IPR020057">
    <property type="entry name" value="Ribosomal_bL25_b-dom"/>
</dbReference>
<dbReference type="InterPro" id="IPR037121">
    <property type="entry name" value="Ribosomal_bL25_C"/>
</dbReference>
<dbReference type="InterPro" id="IPR001021">
    <property type="entry name" value="Ribosomal_bL25_long"/>
</dbReference>
<dbReference type="InterPro" id="IPR029751">
    <property type="entry name" value="Ribosomal_L25_dom"/>
</dbReference>
<dbReference type="InterPro" id="IPR020930">
    <property type="entry name" value="Ribosomal_uL5_bac-type"/>
</dbReference>
<dbReference type="NCBIfam" id="TIGR00731">
    <property type="entry name" value="bL25_bact_ctc"/>
    <property type="match status" value="1"/>
</dbReference>
<dbReference type="NCBIfam" id="NF004128">
    <property type="entry name" value="PRK05618.1-2"/>
    <property type="match status" value="1"/>
</dbReference>
<dbReference type="NCBIfam" id="NF004612">
    <property type="entry name" value="PRK05943.1"/>
    <property type="match status" value="1"/>
</dbReference>
<dbReference type="PANTHER" id="PTHR33284">
    <property type="entry name" value="RIBOSOMAL PROTEIN L25/GLN-TRNA SYNTHETASE, ANTI-CODON-BINDING DOMAIN-CONTAINING PROTEIN"/>
    <property type="match status" value="1"/>
</dbReference>
<dbReference type="PANTHER" id="PTHR33284:SF1">
    <property type="entry name" value="RIBOSOMAL PROTEIN L25_GLN-TRNA SYNTHETASE, ANTI-CODON-BINDING DOMAIN-CONTAINING PROTEIN"/>
    <property type="match status" value="1"/>
</dbReference>
<dbReference type="Pfam" id="PF01386">
    <property type="entry name" value="Ribosomal_L25p"/>
    <property type="match status" value="1"/>
</dbReference>
<dbReference type="Pfam" id="PF14693">
    <property type="entry name" value="Ribosomal_TL5_C"/>
    <property type="match status" value="1"/>
</dbReference>
<dbReference type="SUPFAM" id="SSF50715">
    <property type="entry name" value="Ribosomal protein L25-like"/>
    <property type="match status" value="1"/>
</dbReference>
<reference key="1">
    <citation type="journal article" date="2005" name="Infect. Immun.">
        <title>Whole-genome analyses of speciation events in pathogenic Brucellae.</title>
        <authorList>
            <person name="Chain P.S."/>
            <person name="Comerci D.J."/>
            <person name="Tolmasky M.E."/>
            <person name="Larimer F.W."/>
            <person name="Malfatti S.A."/>
            <person name="Vergez L.M."/>
            <person name="Aguero F."/>
            <person name="Land M.L."/>
            <person name="Ugalde R.A."/>
            <person name="Garcia E."/>
        </authorList>
    </citation>
    <scope>NUCLEOTIDE SEQUENCE [LARGE SCALE GENOMIC DNA]</scope>
    <source>
        <strain>2308</strain>
    </source>
</reference>
<sequence length="207" mass="22383">MSETYVLKADLRTRVGKGSSRELRRNGQIPAVIYGDKQEPLAIAVSYKEIFYKIHGGGFKTTVATIEVDGKKIQVLPKDYQLDPVRDFPQHVDFLRVSAKSVVHVNVPVHFKNEEAAPGIKRGGVLNVVRHDVELIVPANAIPEALEIDLSGLEIGDSVHISAVKLPKGATPAIQDRDFTIATIAAPAGLKSEENAEGAAEEAKDGE</sequence>
<name>RL25_BRUA2</name>
<evidence type="ECO:0000255" key="1">
    <source>
        <dbReference type="HAMAP-Rule" id="MF_01334"/>
    </source>
</evidence>
<evidence type="ECO:0000305" key="2"/>